<comment type="function">
    <text evidence="1">Catalyzes the first step in the D-alanylation of lipoteichoic acid (LTA), the activation of D-alanine and its transfer onto the D-alanyl carrier protein (Dcp) DltC. In an ATP-dependent two-step reaction, forms a high energy D-alanyl-AMP intermediate, followed by transfer of the D-alanyl residue as a thiol ester to the phosphopantheinyl prosthetic group of the Dcp. D-alanylation of LTA plays an important role in modulating the properties of the cell wall in Gram-positive bacteria, influencing the net charge of the cell wall.</text>
</comment>
<comment type="catalytic activity">
    <reaction evidence="1">
        <text>holo-[D-alanyl-carrier protein] + D-alanine + ATP = D-alanyl-[D-alanyl-carrier protein] + AMP + diphosphate</text>
        <dbReference type="Rhea" id="RHEA:55132"/>
        <dbReference type="Rhea" id="RHEA-COMP:14102"/>
        <dbReference type="Rhea" id="RHEA-COMP:14103"/>
        <dbReference type="ChEBI" id="CHEBI:30616"/>
        <dbReference type="ChEBI" id="CHEBI:33019"/>
        <dbReference type="ChEBI" id="CHEBI:57416"/>
        <dbReference type="ChEBI" id="CHEBI:64479"/>
        <dbReference type="ChEBI" id="CHEBI:138620"/>
        <dbReference type="ChEBI" id="CHEBI:456215"/>
        <dbReference type="EC" id="6.2.1.54"/>
    </reaction>
</comment>
<comment type="pathway">
    <text evidence="1">Cell wall biogenesis; lipoteichoic acid biosynthesis.</text>
</comment>
<comment type="subcellular location">
    <subcellularLocation>
        <location evidence="1">Cytoplasm</location>
    </subcellularLocation>
</comment>
<comment type="similarity">
    <text evidence="1">Belongs to the ATP-dependent AMP-binding enzyme family. DltA subfamily.</text>
</comment>
<organism>
    <name type="scientific">Staphylococcus aureus (strain bovine RF122 / ET3-1)</name>
    <dbReference type="NCBI Taxonomy" id="273036"/>
    <lineage>
        <taxon>Bacteria</taxon>
        <taxon>Bacillati</taxon>
        <taxon>Bacillota</taxon>
        <taxon>Bacilli</taxon>
        <taxon>Bacillales</taxon>
        <taxon>Staphylococcaceae</taxon>
        <taxon>Staphylococcus</taxon>
    </lineage>
</organism>
<proteinExistence type="inferred from homology"/>
<evidence type="ECO:0000255" key="1">
    <source>
        <dbReference type="HAMAP-Rule" id="MF_00593"/>
    </source>
</evidence>
<protein>
    <recommendedName>
        <fullName evidence="1">D-alanine--D-alanyl carrier protein ligase</fullName>
        <shortName evidence="1">DCL</shortName>
        <ecNumber evidence="1">6.2.1.54</ecNumber>
    </recommendedName>
    <alternativeName>
        <fullName evidence="1">D-alanine--poly(phosphoribitol) ligase subunit 1</fullName>
    </alternativeName>
    <alternativeName>
        <fullName evidence="1">D-alanine-activating enzyme</fullName>
        <shortName evidence="1">DAE</shortName>
    </alternativeName>
</protein>
<feature type="chain" id="PRO_1000025534" description="D-alanine--D-alanyl carrier protein ligase">
    <location>
        <begin position="1"/>
        <end position="485"/>
    </location>
</feature>
<feature type="binding site" evidence="1">
    <location>
        <begin position="144"/>
        <end position="145"/>
    </location>
    <ligand>
        <name>ATP</name>
        <dbReference type="ChEBI" id="CHEBI:30616"/>
    </ligand>
</feature>
<feature type="binding site" evidence="1">
    <location>
        <position position="189"/>
    </location>
    <ligand>
        <name>D-alanine</name>
        <dbReference type="ChEBI" id="CHEBI:57416"/>
    </ligand>
</feature>
<feature type="binding site" evidence="1">
    <location>
        <begin position="284"/>
        <end position="289"/>
    </location>
    <ligand>
        <name>ATP</name>
        <dbReference type="ChEBI" id="CHEBI:30616"/>
    </ligand>
</feature>
<feature type="binding site" evidence="1">
    <location>
        <position position="293"/>
    </location>
    <ligand>
        <name>D-alanine</name>
        <dbReference type="ChEBI" id="CHEBI:57416"/>
    </ligand>
</feature>
<feature type="binding site" evidence="1">
    <location>
        <position position="365"/>
    </location>
    <ligand>
        <name>ATP</name>
        <dbReference type="ChEBI" id="CHEBI:30616"/>
    </ligand>
</feature>
<feature type="binding site" evidence="1">
    <location>
        <position position="473"/>
    </location>
    <ligand>
        <name>ATP</name>
        <dbReference type="ChEBI" id="CHEBI:30616"/>
    </ligand>
</feature>
<feature type="binding site" evidence="1">
    <location>
        <position position="473"/>
    </location>
    <ligand>
        <name>D-alanine</name>
        <dbReference type="ChEBI" id="CHEBI:57416"/>
    </ligand>
</feature>
<gene>
    <name evidence="1" type="primary">dltA</name>
    <name type="ordered locus">SAB0798</name>
</gene>
<dbReference type="EC" id="6.2.1.54" evidence="1"/>
<dbReference type="EMBL" id="AJ938182">
    <property type="protein sequence ID" value="CAI80486.1"/>
    <property type="molecule type" value="Genomic_DNA"/>
</dbReference>
<dbReference type="RefSeq" id="WP_000129657.1">
    <property type="nucleotide sequence ID" value="NC_007622.1"/>
</dbReference>
<dbReference type="SMR" id="Q2YWQ8"/>
<dbReference type="KEGG" id="sab:SAB0798"/>
<dbReference type="HOGENOM" id="CLU_000022_2_12_9"/>
<dbReference type="UniPathway" id="UPA00556"/>
<dbReference type="GO" id="GO:0005737">
    <property type="term" value="C:cytoplasm"/>
    <property type="evidence" value="ECO:0007669"/>
    <property type="project" value="UniProtKB-SubCell"/>
</dbReference>
<dbReference type="GO" id="GO:0005524">
    <property type="term" value="F:ATP binding"/>
    <property type="evidence" value="ECO:0007669"/>
    <property type="project" value="UniProtKB-KW"/>
</dbReference>
<dbReference type="GO" id="GO:0047473">
    <property type="term" value="F:D-alanine [D-alanyl carrier protein] ligase activity"/>
    <property type="evidence" value="ECO:0007669"/>
    <property type="project" value="UniProtKB-UniRule"/>
</dbReference>
<dbReference type="GO" id="GO:0070395">
    <property type="term" value="P:lipoteichoic acid biosynthetic process"/>
    <property type="evidence" value="ECO:0007669"/>
    <property type="project" value="UniProtKB-UniRule"/>
</dbReference>
<dbReference type="CDD" id="cd05945">
    <property type="entry name" value="DltA"/>
    <property type="match status" value="1"/>
</dbReference>
<dbReference type="FunFam" id="3.30.300.30:FF:000012">
    <property type="entry name" value="D-alanine--D-alanyl carrier protein ligase"/>
    <property type="match status" value="1"/>
</dbReference>
<dbReference type="Gene3D" id="3.30.300.30">
    <property type="match status" value="1"/>
</dbReference>
<dbReference type="Gene3D" id="3.40.50.12780">
    <property type="entry name" value="N-terminal domain of ligase-like"/>
    <property type="match status" value="1"/>
</dbReference>
<dbReference type="HAMAP" id="MF_00593">
    <property type="entry name" value="DltA"/>
    <property type="match status" value="1"/>
</dbReference>
<dbReference type="InterPro" id="IPR010071">
    <property type="entry name" value="AA_adenyl_dom"/>
</dbReference>
<dbReference type="InterPro" id="IPR025110">
    <property type="entry name" value="AMP-bd_C"/>
</dbReference>
<dbReference type="InterPro" id="IPR045851">
    <property type="entry name" value="AMP-bd_C_sf"/>
</dbReference>
<dbReference type="InterPro" id="IPR000873">
    <property type="entry name" value="AMP-dep_synth/lig_dom"/>
</dbReference>
<dbReference type="InterPro" id="IPR042099">
    <property type="entry name" value="ANL_N_sf"/>
</dbReference>
<dbReference type="InterPro" id="IPR010072">
    <property type="entry name" value="DltA"/>
</dbReference>
<dbReference type="InterPro" id="IPR044507">
    <property type="entry name" value="DltA-like"/>
</dbReference>
<dbReference type="NCBIfam" id="TIGR01733">
    <property type="entry name" value="AA-adenyl-dom"/>
    <property type="match status" value="1"/>
</dbReference>
<dbReference type="NCBIfam" id="TIGR01734">
    <property type="entry name" value="D-ala-DACP-lig"/>
    <property type="match status" value="1"/>
</dbReference>
<dbReference type="NCBIfam" id="NF003417">
    <property type="entry name" value="PRK04813.1"/>
    <property type="match status" value="1"/>
</dbReference>
<dbReference type="PANTHER" id="PTHR45398">
    <property type="match status" value="1"/>
</dbReference>
<dbReference type="PANTHER" id="PTHR45398:SF1">
    <property type="entry name" value="ENZYME, PUTATIVE (JCVI)-RELATED"/>
    <property type="match status" value="1"/>
</dbReference>
<dbReference type="Pfam" id="PF00501">
    <property type="entry name" value="AMP-binding"/>
    <property type="match status" value="1"/>
</dbReference>
<dbReference type="Pfam" id="PF13193">
    <property type="entry name" value="AMP-binding_C"/>
    <property type="match status" value="1"/>
</dbReference>
<dbReference type="SUPFAM" id="SSF56801">
    <property type="entry name" value="Acetyl-CoA synthetase-like"/>
    <property type="match status" value="1"/>
</dbReference>
<sequence>MTDIINKLQAFADANPQSIAVRHTTDELTYQQLMDESSKLAHRLQGSKKPMILFGHMSPYMIVGMIGAIKAGCGYVPVDTSIPEDRIKMIINKVQPEFVFNTTDESFESLEGEVFTIEDIKTSQDPVIFDSQIKDNDTVYTIFTSGSTGEPKGVQIEYASLVQFTEWMLELNKSGNEQQWLNQAPFSFDLSVMAIYPCLASGGTLNLVDKNMINKPKLLNEMLTSIPINIWVSTPSFMEMCLLLPTLNEEQYGSLNEFFFCGEILPHRAAKALVSRFPSATIYNTYGPTEATVAVTSIQITQEILDQYPTLPVGVERPGARLSTTDEGELVIEGQSVSLGYLKNDQKTAEVFNFDDGIRTYHTGDKAKFENGQWFIQGRIDFQIKLNGYRMELEEIETQLRQSEFVKEAIVVPVYKNDKVIHLIGAIVPTTEVTDNAEMTKNIKNDLKSRLPEYMIPRKFEWMEQLPLTSNGKIDRKKIAEVING</sequence>
<keyword id="KW-0067">ATP-binding</keyword>
<keyword id="KW-0963">Cytoplasm</keyword>
<keyword id="KW-0436">Ligase</keyword>
<keyword id="KW-0547">Nucleotide-binding</keyword>
<name>DLTA_STAAB</name>
<reference key="1">
    <citation type="journal article" date="2007" name="PLoS ONE">
        <title>Molecular correlates of host specialization in Staphylococcus aureus.</title>
        <authorList>
            <person name="Herron-Olson L."/>
            <person name="Fitzgerald J.R."/>
            <person name="Musser J.M."/>
            <person name="Kapur V."/>
        </authorList>
    </citation>
    <scope>NUCLEOTIDE SEQUENCE [LARGE SCALE GENOMIC DNA]</scope>
    <source>
        <strain>bovine RF122 / ET3-1</strain>
    </source>
</reference>
<accession>Q2YWQ8</accession>